<dbReference type="PDB" id="2KY3">
    <property type="method" value="NMR"/>
    <property type="chains" value="A=1-31"/>
</dbReference>
<dbReference type="PDB" id="2LU9">
    <property type="method" value="NMR"/>
    <property type="chains" value="A=1-31"/>
</dbReference>
<dbReference type="PDB" id="2ME7">
    <property type="method" value="NMR"/>
    <property type="chains" value="A=1-31"/>
</dbReference>
<dbReference type="PDB" id="2MEL">
    <property type="method" value="NMR"/>
    <property type="chains" value="A=1-31"/>
</dbReference>
<dbReference type="PDB" id="2MEN">
    <property type="method" value="NMR"/>
    <property type="chains" value="A=1-31"/>
</dbReference>
<dbReference type="PDB" id="2MEO">
    <property type="method" value="NMR"/>
    <property type="chains" value="A=1-31"/>
</dbReference>
<dbReference type="PDB" id="6D3T">
    <property type="method" value="NMR"/>
    <property type="chains" value="A=1-29"/>
</dbReference>
<dbReference type="PDB" id="6D8H">
    <property type="method" value="NMR"/>
    <property type="chains" value="A=1-31"/>
</dbReference>
<dbReference type="PDB" id="6D8Q">
    <property type="method" value="NMR"/>
    <property type="chains" value="A=1-31"/>
</dbReference>
<dbReference type="PDB" id="6D8R">
    <property type="method" value="NMR"/>
    <property type="chains" value="A=1-31"/>
</dbReference>
<dbReference type="PDB" id="6D8S">
    <property type="method" value="NMR"/>
    <property type="chains" value="A=1-31"/>
</dbReference>
<dbReference type="PDB" id="6D8T">
    <property type="method" value="NMR"/>
    <property type="chains" value="A=1-31"/>
</dbReference>
<dbReference type="PDB" id="6D8U">
    <property type="method" value="NMR"/>
    <property type="chains" value="A=1-31"/>
</dbReference>
<dbReference type="PDB" id="6D8Y">
    <property type="method" value="NMR"/>
    <property type="chains" value="A=1-30"/>
</dbReference>
<dbReference type="PDB" id="6D93">
    <property type="method" value="NMR"/>
    <property type="chains" value="A=1-30"/>
</dbReference>
<dbReference type="PDB" id="6D9O">
    <property type="method" value="NMR"/>
    <property type="chains" value="A=1-31"/>
</dbReference>
<dbReference type="PDB" id="6D9P">
    <property type="method" value="NMR"/>
    <property type="chains" value="A=1-31"/>
</dbReference>
<dbReference type="PDB" id="6VNZ">
    <property type="method" value="NMR"/>
    <property type="chains" value="A=1-31"/>
</dbReference>
<dbReference type="PDBsum" id="2KY3"/>
<dbReference type="PDBsum" id="2LU9"/>
<dbReference type="PDBsum" id="2ME7"/>
<dbReference type="PDBsum" id="2MEL"/>
<dbReference type="PDBsum" id="2MEN"/>
<dbReference type="PDBsum" id="2MEO"/>
<dbReference type="PDBsum" id="6D3T"/>
<dbReference type="PDBsum" id="6D8H"/>
<dbReference type="PDBsum" id="6D8Q"/>
<dbReference type="PDBsum" id="6D8R"/>
<dbReference type="PDBsum" id="6D8S"/>
<dbReference type="PDBsum" id="6D8T"/>
<dbReference type="PDBsum" id="6D8U"/>
<dbReference type="PDBsum" id="6D8Y"/>
<dbReference type="PDBsum" id="6D93"/>
<dbReference type="PDBsum" id="6D9O"/>
<dbReference type="PDBsum" id="6D9P"/>
<dbReference type="PDBsum" id="6VNZ"/>
<dbReference type="BMRB" id="P59869"/>
<dbReference type="SMR" id="P59869"/>
<dbReference type="EvolutionaryTrace" id="P59869"/>
<dbReference type="GO" id="GO:0005576">
    <property type="term" value="C:extracellular region"/>
    <property type="evidence" value="ECO:0007669"/>
    <property type="project" value="UniProtKB-SubCell"/>
</dbReference>
<dbReference type="GO" id="GO:0008200">
    <property type="term" value="F:ion channel inhibitor activity"/>
    <property type="evidence" value="ECO:0007669"/>
    <property type="project" value="InterPro"/>
</dbReference>
<dbReference type="GO" id="GO:0015459">
    <property type="term" value="F:potassium channel regulator activity"/>
    <property type="evidence" value="ECO:0007669"/>
    <property type="project" value="UniProtKB-KW"/>
</dbReference>
<dbReference type="GO" id="GO:0090729">
    <property type="term" value="F:toxin activity"/>
    <property type="evidence" value="ECO:0007669"/>
    <property type="project" value="UniProtKB-KW"/>
</dbReference>
<dbReference type="InterPro" id="IPR036574">
    <property type="entry name" value="Scorpion_toxin-like_sf"/>
</dbReference>
<dbReference type="InterPro" id="IPR001947">
    <property type="entry name" value="Scorpion_toxinS_K_inh"/>
</dbReference>
<dbReference type="Pfam" id="PF00451">
    <property type="entry name" value="Toxin_2"/>
    <property type="match status" value="1"/>
</dbReference>
<dbReference type="SUPFAM" id="SSF57095">
    <property type="entry name" value="Scorpion toxin-like"/>
    <property type="match status" value="1"/>
</dbReference>
<dbReference type="PROSITE" id="PS01138">
    <property type="entry name" value="SCORP_SHORT_TOXIN"/>
    <property type="match status" value="1"/>
</dbReference>
<evidence type="ECO:0000269" key="1">
    <source>
    </source>
</evidence>
<evidence type="ECO:0000269" key="2">
    <source>
    </source>
</evidence>
<evidence type="ECO:0000303" key="3">
    <source>
    </source>
</evidence>
<evidence type="ECO:0000303" key="4">
    <source>
    </source>
</evidence>
<evidence type="ECO:0000305" key="5"/>
<evidence type="ECO:0000305" key="6">
    <source>
    </source>
</evidence>
<evidence type="ECO:0000305" key="7">
    <source>
    </source>
</evidence>
<evidence type="ECO:0000312" key="8">
    <source>
        <dbReference type="PDB" id="2LU9"/>
    </source>
</evidence>
<evidence type="ECO:0007829" key="9">
    <source>
        <dbReference type="PDB" id="2KY3"/>
    </source>
</evidence>
<sequence>AFCNLRRCELSCRSLGLLGKCIGEECKCVPY</sequence>
<reference key="1">
    <citation type="journal article" date="2002" name="J. Biol. Chem.">
        <title>Tamapin, a venom peptide from the Indian red scorpion (Mesobuthus tamulus) that targets small conductance Ca2+-activated K+ channels and afterhyperpolarization currents in central neurons.</title>
        <authorList>
            <person name="Pedarzani P."/>
            <person name="D'hoedt D."/>
            <person name="Doorty K.B."/>
            <person name="Wadsworth J.D.F."/>
            <person name="Joseph J.S."/>
            <person name="Jeyaseelan K."/>
            <person name="Kini R.M."/>
            <person name="Gadre S.V."/>
            <person name="Sapatnekar S.M."/>
            <person name="Stocker M."/>
            <person name="Strong P.N."/>
        </authorList>
    </citation>
    <scope>PROTEIN SEQUENCE</scope>
    <scope>FUNCTION</scope>
    <scope>AMIDATION AT TYR-31</scope>
    <scope>MASS SPECTROMETRY</scope>
    <scope>SUBCELLULAR LOCATION</scope>
    <source>
        <tissue>Venom</tissue>
    </source>
</reference>
<reference key="2">
    <citation type="journal article" date="2014" name="Chem. Res. Toxicol.">
        <title>Cytotoxicity of recombinant tamapin and related toxin-like peptides on model cell lines.</title>
        <authorList>
            <person name="Ramirez-Cordero B."/>
            <person name="Toledano Y."/>
            <person name="Cano-Sanchez P."/>
            <person name="Hernandez-Lopez R."/>
            <person name="Flores-Solis D."/>
            <person name="Saucedo-Yanez A.L."/>
            <person name="Chavez-Uribe I."/>
            <person name="Brieba L.G."/>
            <person name="del Rio-Portilla F."/>
        </authorList>
    </citation>
    <scope>STRUCTURE BY NMR</scope>
    <scope>DISULFIDE BOND</scope>
    <scope>MUTAGENESIS OF ALA-1; ARG-6; ARG-7 AND ARG-13</scope>
</reference>
<protein>
    <recommendedName>
        <fullName evidence="4">Potassium channel toxin alpha-KTx 5.4</fullName>
    </recommendedName>
    <alternativeName>
        <fullName evidence="3">Tamapin</fullName>
    </alternativeName>
</protein>
<proteinExistence type="evidence at protein level"/>
<accession>P59869</accession>
<feature type="peptide" id="PRO_0000044930" description="Potassium channel toxin alpha-KTx 5.4" evidence="1">
    <location>
        <begin position="1"/>
        <end position="31"/>
    </location>
</feature>
<feature type="region of interest" description="[R/K]XCQ motif" evidence="7">
    <location>
        <begin position="6"/>
        <end position="9"/>
    </location>
</feature>
<feature type="modified residue" description="Tyrosine amide" evidence="6">
    <location>
        <position position="31"/>
    </location>
</feature>
<feature type="disulfide bond" evidence="2 8">
    <location>
        <begin position="3"/>
        <end position="21"/>
    </location>
</feature>
<feature type="disulfide bond" evidence="2 8">
    <location>
        <begin position="8"/>
        <end position="26"/>
    </location>
</feature>
<feature type="disulfide bond" evidence="2 8">
    <location>
        <begin position="12"/>
        <end position="28"/>
    </location>
</feature>
<feature type="mutagenesis site" description="Small decrease in cytotoxicity towards Jurkat cells. In GS-R7A; 2-fold decrease in cytotoxicity towards Jurkat cells; when associated with A-7." evidence="2">
    <original>A</original>
    <variation>GSA</variation>
    <location>
        <position position="1"/>
    </location>
</feature>
<feature type="mutagenesis site" description="Small decrease in cytotoxicity towards Jurkat cells. In r-R6A-R7A; 1.74-fold decrease in cytotoxicity towards Jurkat cells; when associated with A-7." evidence="2">
    <original>R</original>
    <variation>A</variation>
    <location>
        <position position="6"/>
    </location>
</feature>
<feature type="mutagenesis site" description="In r-R6A-R7A; 1.74-fold decrease in cytotoxicity towards Jurkat cells; when associated with A-6. In GS-R7A; 2-fold decrease in cytotoxicity towards Jurkat cells; when associated with 1-G--A-1." evidence="2">
    <original>R</original>
    <variation>A</variation>
    <location>
        <position position="7"/>
    </location>
</feature>
<feature type="mutagenesis site" description="1.45-fold decrease in cell death of Jurkat cells." evidence="2">
    <original>R</original>
    <variation>A</variation>
    <location>
        <position position="13"/>
    </location>
</feature>
<feature type="helix" evidence="9">
    <location>
        <begin position="5"/>
        <end position="12"/>
    </location>
</feature>
<feature type="helix" evidence="9">
    <location>
        <begin position="13"/>
        <end position="15"/>
    </location>
</feature>
<feature type="strand" evidence="9">
    <location>
        <begin position="17"/>
        <end position="20"/>
    </location>
</feature>
<feature type="strand" evidence="9">
    <location>
        <begin position="27"/>
        <end position="29"/>
    </location>
</feature>
<organism>
    <name type="scientific">Hottentotta tamulus</name>
    <name type="common">Eastern Indian scorpion</name>
    <name type="synonym">Mesobuthus tamulus</name>
    <dbReference type="NCBI Taxonomy" id="34647"/>
    <lineage>
        <taxon>Eukaryota</taxon>
        <taxon>Metazoa</taxon>
        <taxon>Ecdysozoa</taxon>
        <taxon>Arthropoda</taxon>
        <taxon>Chelicerata</taxon>
        <taxon>Arachnida</taxon>
        <taxon>Scorpiones</taxon>
        <taxon>Buthida</taxon>
        <taxon>Buthoidea</taxon>
        <taxon>Buthidae</taxon>
        <taxon>Mesobuthus</taxon>
    </lineage>
</organism>
<comment type="function">
    <text evidence="1">Blocks small conductance calcium-activated potassium channels (PubMed:12239213). Shows activity on KCa2.2/KCNN2 (IC(50)=0.0243 nM), KCa2.3/KCNN3 (IC(50)=1.7 nM), and KCa2.1/KCNN1 (IC(50)=42 nM) (PubMed:12239213). Induces cell death when tested on human T lymphoblastic leukemia Jurkat E6.1 and human breast cancer MDA-MB-231 cell lines which constituvely express KCa2.2/KCNN2, but not on human peripheral blood lymphocytes (which do not express KCa2.2/KCNN2) (PubMed:24821061).</text>
</comment>
<comment type="subcellular location">
    <subcellularLocation>
        <location evidence="1">Secreted</location>
    </subcellularLocation>
</comment>
<comment type="tissue specificity">
    <text evidence="6">Expressed by the venom gland.</text>
</comment>
<comment type="domain">
    <text evidence="2">Has the structural arrangement of an alpha-helix connected to a beta-sheet by disulfide bonds (CSalpha/beta).</text>
</comment>
<comment type="mass spectrometry"/>
<comment type="miscellaneous">
    <text evidence="1">Negative results: does not show inhibition on KCa3.1/KCNN4 at concentrations up to 50 nM.</text>
</comment>
<comment type="similarity">
    <text evidence="5">Belongs to the short scorpion toxin superfamily. Potassium channel inhibitor family. Alpha-KTx 05 subfamily.</text>
</comment>
<name>KAX54_HOTTA</name>
<keyword id="KW-0002">3D-structure</keyword>
<keyword id="KW-0027">Amidation</keyword>
<keyword id="KW-1221">Calcium-activated potassium channel impairing toxin</keyword>
<keyword id="KW-0903">Direct protein sequencing</keyword>
<keyword id="KW-1015">Disulfide bond</keyword>
<keyword id="KW-0872">Ion channel impairing toxin</keyword>
<keyword id="KW-0528">Neurotoxin</keyword>
<keyword id="KW-0632">Potassium channel impairing toxin</keyword>
<keyword id="KW-0964">Secreted</keyword>
<keyword id="KW-0800">Toxin</keyword>